<keyword id="KW-0067">ATP-binding</keyword>
<keyword id="KW-0963">Cytoplasm</keyword>
<keyword id="KW-0418">Kinase</keyword>
<keyword id="KW-0443">Lipid metabolism</keyword>
<keyword id="KW-0472">Membrane</keyword>
<keyword id="KW-0479">Metal-binding</keyword>
<keyword id="KW-0547">Nucleotide-binding</keyword>
<keyword id="KW-1185">Reference proteome</keyword>
<keyword id="KW-0677">Repeat</keyword>
<keyword id="KW-0808">Transferase</keyword>
<keyword id="KW-0812">Transmembrane</keyword>
<keyword id="KW-1133">Transmembrane helix</keyword>
<keyword id="KW-0862">Zinc</keyword>
<keyword id="KW-0863">Zinc-finger</keyword>
<comment type="function">
    <text evidence="1 5 6">Membrane-bound diacylglycerol kinase that converts diacylglycerol/DAG into phosphatidic acid/phosphatidate/PA and regulates the respective levels of these two bioactive lipids (PubMed:11287665). Thereby, acts as a central switch between the signaling pathways activated by these second messengers with different cellular targets and opposite effects in numerous biological processes (PubMed:11287665). Also plays an important role in the biosynthesis of complex lipids (By similarity). Displays specificity for diacylglycerol substrates with an arachidonoyl acyl chain at the sn-2 position, with the highest activity toward 1-octadecanoyl-2-(5Z,8Z,11Z,14Z-eicosatetraenoyl)-sn-glycerol the main diacylglycerol intermediate within the phosphatidylinositol turnover cycle (PubMed:11287665, PubMed:19744926). Can also phosphorylate diacylglycerol substrates with a linoleoyl acyl chain at the sn-2 position but much less efficiently (By similarity).</text>
</comment>
<comment type="catalytic activity">
    <reaction evidence="5">
        <text>a 1,2-diacyl-sn-glycerol + ATP = a 1,2-diacyl-sn-glycero-3-phosphate + ADP + H(+)</text>
        <dbReference type="Rhea" id="RHEA:10272"/>
        <dbReference type="ChEBI" id="CHEBI:15378"/>
        <dbReference type="ChEBI" id="CHEBI:17815"/>
        <dbReference type="ChEBI" id="CHEBI:30616"/>
        <dbReference type="ChEBI" id="CHEBI:58608"/>
        <dbReference type="ChEBI" id="CHEBI:456216"/>
        <dbReference type="EC" id="2.7.1.107"/>
    </reaction>
    <physiologicalReaction direction="left-to-right" evidence="5">
        <dbReference type="Rhea" id="RHEA:10273"/>
    </physiologicalReaction>
</comment>
<comment type="catalytic activity">
    <reaction evidence="1">
        <text>1-hexadecanoyl-2-(5Z,8Z,11Z,14Z-eicosatetraenoyl)-sn-glycerol + ATP = 1-hexadecanoyl-2-(5Z,8Z,11Z,14Z-eicosatetraenoyl)-sn-glycero-3-phosphate + ADP + H(+)</text>
        <dbReference type="Rhea" id="RHEA:40335"/>
        <dbReference type="ChEBI" id="CHEBI:15378"/>
        <dbReference type="ChEBI" id="CHEBI:30616"/>
        <dbReference type="ChEBI" id="CHEBI:72864"/>
        <dbReference type="ChEBI" id="CHEBI:77096"/>
        <dbReference type="ChEBI" id="CHEBI:456216"/>
    </reaction>
    <physiologicalReaction direction="left-to-right" evidence="1">
        <dbReference type="Rhea" id="RHEA:40336"/>
    </physiologicalReaction>
</comment>
<comment type="catalytic activity">
    <reaction evidence="1">
        <text>1-octadecanoyl-2-(5Z,8Z,11Z,14Z-eicosatetraenoyl)-sn-glycerol + ATP = 1-octadecanoyl-2-(5Z,8Z,11Z,14Z-eicosatetraenoyl)-sn-glycero-3-phosphate + ADP + H(+)</text>
        <dbReference type="Rhea" id="RHEA:40323"/>
        <dbReference type="ChEBI" id="CHEBI:15378"/>
        <dbReference type="ChEBI" id="CHEBI:30616"/>
        <dbReference type="ChEBI" id="CHEBI:75728"/>
        <dbReference type="ChEBI" id="CHEBI:77091"/>
        <dbReference type="ChEBI" id="CHEBI:456216"/>
    </reaction>
    <physiologicalReaction direction="left-to-right" evidence="1">
        <dbReference type="Rhea" id="RHEA:40324"/>
    </physiologicalReaction>
</comment>
<comment type="catalytic activity">
    <reaction evidence="1">
        <text>1-eicosanoyl-2-(5Z,8Z,11Z,14Z)-eicosatetraenoyl-sn-glycerol + ATP = 1-eicosanoyl-2-(5Z,8Z,11Z,14Z)-eicosatetraenoyl-sn-glycero-3-phosphate + ADP + H(+)</text>
        <dbReference type="Rhea" id="RHEA:40331"/>
        <dbReference type="ChEBI" id="CHEBI:15378"/>
        <dbReference type="ChEBI" id="CHEBI:30616"/>
        <dbReference type="ChEBI" id="CHEBI:77094"/>
        <dbReference type="ChEBI" id="CHEBI:87223"/>
        <dbReference type="ChEBI" id="CHEBI:456216"/>
    </reaction>
    <physiologicalReaction direction="left-to-right" evidence="1">
        <dbReference type="Rhea" id="RHEA:40332"/>
    </physiologicalReaction>
</comment>
<comment type="catalytic activity">
    <reaction evidence="1">
        <text>1,2-di-(5Z,8Z,11Z,14Z)-eicosatetraenoyl-sn-glycerol + ATP = 1,2-di-(5Z,8Z,11Z,14Z)-eicosatetraenoyl-sn-glycero-3-phosphate + ADP + H(+)</text>
        <dbReference type="Rhea" id="RHEA:40351"/>
        <dbReference type="ChEBI" id="CHEBI:15378"/>
        <dbReference type="ChEBI" id="CHEBI:30616"/>
        <dbReference type="ChEBI" id="CHEBI:77125"/>
        <dbReference type="ChEBI" id="CHEBI:77126"/>
        <dbReference type="ChEBI" id="CHEBI:456216"/>
    </reaction>
    <physiologicalReaction direction="left-to-right" evidence="1">
        <dbReference type="Rhea" id="RHEA:40352"/>
    </physiologicalReaction>
</comment>
<comment type="catalytic activity">
    <reaction evidence="1">
        <text>1-octadecanoyl-2-(9Z,12Z)-octadecadienoyl-sn-glycerol + ATP = 1-octadecanoyl-2-(9Z,12Z-octadecadienoyl)-sn-glycero-3-phosphate + ADP + H(+)</text>
        <dbReference type="Rhea" id="RHEA:40339"/>
        <dbReference type="ChEBI" id="CHEBI:15378"/>
        <dbReference type="ChEBI" id="CHEBI:30616"/>
        <dbReference type="ChEBI" id="CHEBI:77097"/>
        <dbReference type="ChEBI" id="CHEBI:77098"/>
        <dbReference type="ChEBI" id="CHEBI:456216"/>
    </reaction>
    <physiologicalReaction direction="left-to-right" evidence="1">
        <dbReference type="Rhea" id="RHEA:40340"/>
    </physiologicalReaction>
</comment>
<comment type="catalytic activity">
    <reaction evidence="1">
        <text>1,2-di-(9Z,12Z-octadecadienoyl)-sn-glycerol + ATP = 1,2-di-(9Z,12Z-octadecadienoyl)-sn-glycero-3-phosphate + ADP + H(+)</text>
        <dbReference type="Rhea" id="RHEA:40355"/>
        <dbReference type="ChEBI" id="CHEBI:15378"/>
        <dbReference type="ChEBI" id="CHEBI:30616"/>
        <dbReference type="ChEBI" id="CHEBI:77127"/>
        <dbReference type="ChEBI" id="CHEBI:77128"/>
        <dbReference type="ChEBI" id="CHEBI:456216"/>
    </reaction>
    <physiologicalReaction direction="left-to-right" evidence="1">
        <dbReference type="Rhea" id="RHEA:40356"/>
    </physiologicalReaction>
</comment>
<comment type="catalytic activity">
    <reaction evidence="1">
        <text>1,2-di-(9Z-octadecenoyl)-sn-glycerol + ATP = 1,2-di-(9Z-octadecenoyl)-sn-glycero-3-phosphate + ADP + H(+)</text>
        <dbReference type="Rhea" id="RHEA:40327"/>
        <dbReference type="ChEBI" id="CHEBI:15378"/>
        <dbReference type="ChEBI" id="CHEBI:30616"/>
        <dbReference type="ChEBI" id="CHEBI:52333"/>
        <dbReference type="ChEBI" id="CHEBI:74546"/>
        <dbReference type="ChEBI" id="CHEBI:456216"/>
    </reaction>
    <physiologicalReaction direction="left-to-right" evidence="1">
        <dbReference type="Rhea" id="RHEA:40328"/>
    </physiologicalReaction>
</comment>
<comment type="pathway">
    <text evidence="5 6">Lipid metabolism; glycerolipid metabolism.</text>
</comment>
<comment type="subcellular location">
    <subcellularLocation>
        <location evidence="1">Membrane</location>
        <topology evidence="2">Single-pass membrane protein</topology>
    </subcellularLocation>
    <subcellularLocation>
        <location evidence="1">Cytoplasm</location>
    </subcellularLocation>
</comment>
<comment type="tissue specificity">
    <text evidence="5 7">Highly expressed in brain and heart (PubMed:11287665). In brain, highly expressed in Purkinje cells of the cerebellum, pyramidal cells of the hippocampus, mitral cells of the olfactory bulb, and neurons of the substantia nigra (PubMed:11287665). Lower expression in neurons of the thalamus, superior olive, and lateral reticular nucleus is also detected (PubMed:11287665). Expressed in platelets (PubMed:23542698).</text>
</comment>
<comment type="disruption phenotype">
    <text evidence="5">Homozygous knockout mice are normal, reproduce and behave normally. No gross or histological abnormalities in major organs, including the brain are observed (PubMed:11287665). The phosphatidylinositol 4,5- bisphosphate-signaling pathway in cerebral cortex and long-term potentiation are affected (PubMed:11287665).</text>
</comment>
<comment type="similarity">
    <text evidence="8">Belongs to the eukaryotic diacylglycerol kinase family.</text>
</comment>
<evidence type="ECO:0000250" key="1">
    <source>
        <dbReference type="UniProtKB" id="P52429"/>
    </source>
</evidence>
<evidence type="ECO:0000255" key="2"/>
<evidence type="ECO:0000255" key="3">
    <source>
        <dbReference type="PROSITE-ProRule" id="PRU00226"/>
    </source>
</evidence>
<evidence type="ECO:0000255" key="4">
    <source>
        <dbReference type="PROSITE-ProRule" id="PRU00783"/>
    </source>
</evidence>
<evidence type="ECO:0000269" key="5">
    <source>
    </source>
</evidence>
<evidence type="ECO:0000269" key="6">
    <source>
    </source>
</evidence>
<evidence type="ECO:0000269" key="7">
    <source>
    </source>
</evidence>
<evidence type="ECO:0000305" key="8"/>
<sequence>MEGDQRSGPPAQSLLPDGHLVLWTLCSVLLPVFITLWCSLQRSRRQLHRRDIFRKSKHCWRDTDLFSHPTYCCVCAQHILQGAFCDCCGLRVDEGCLKKVDKRFPCKEIMLKNDKAADAMPHHWIRGNVPLCSYCVFCRQQCGSQPKLCDYRCIWCQKTVHDECMRGSLRSEKCDFGEFRNLIIPPSYLTSINQMRKDKNTNYEGLASKFGKQWTPLIILANSRSGTNMGEGLLGEFKILLNPVQVFDVTKTPPIKALQLCTLLPYYSVRVLVCGGDGTVGWVLDAIDEMKIKGQEKYIPEVAVLPLGTGNDLSNTLGWGTGYAGEIPVAQVLRNVMEADGIKLDRWKVQVTNKGYYNLRKPKEFTMNNYFSVGPDALMALNFHAHREKAPSLFSSRILNKAVYLFYGTKDCLVQECKDLNKKIELELDGERVELPNLEGIIVLNIGYWGGGCRLWEGMGDETYPLARHDDGLLEIVGVYGSFHCAQIQVKLANPFRIGQAHTVRLTLKCSMMPMQVDGEPWAQGPCTVTITHKTHALMLYFSGEQSDDDISSPSDHEDVKEAE</sequence>
<organism>
    <name type="scientific">Mus musculus</name>
    <name type="common">Mouse</name>
    <dbReference type="NCBI Taxonomy" id="10090"/>
    <lineage>
        <taxon>Eukaryota</taxon>
        <taxon>Metazoa</taxon>
        <taxon>Chordata</taxon>
        <taxon>Craniata</taxon>
        <taxon>Vertebrata</taxon>
        <taxon>Euteleostomi</taxon>
        <taxon>Mammalia</taxon>
        <taxon>Eutheria</taxon>
        <taxon>Euarchontoglires</taxon>
        <taxon>Glires</taxon>
        <taxon>Rodentia</taxon>
        <taxon>Myomorpha</taxon>
        <taxon>Muroidea</taxon>
        <taxon>Muridae</taxon>
        <taxon>Murinae</taxon>
        <taxon>Mus</taxon>
        <taxon>Mus</taxon>
    </lineage>
</organism>
<reference key="1">
    <citation type="journal article" date="2001" name="Proc. Natl. Acad. Sci. U.S.A.">
        <title>Diacylglycerol kinase epsilon regulates seizure susceptibility and long-term potentiation through arachidonoyl-inositol lipid signaling.</title>
        <authorList>
            <person name="Rodriguez de Turco E.B."/>
            <person name="Tang W."/>
            <person name="Topham M.K."/>
            <person name="Sakane F."/>
            <person name="Marcheselli V.L."/>
            <person name="Chen C."/>
            <person name="Taketomi A."/>
            <person name="Prescott S.M."/>
            <person name="Bazan N.G."/>
        </authorList>
    </citation>
    <scope>NUCLEOTIDE SEQUENCE [MRNA]</scope>
    <scope>FUNCTION</scope>
    <scope>CATALYTIC ACTIVITY</scope>
    <scope>PATHWAY</scope>
    <scope>DISRUPTION PHENOTYPE</scope>
    <scope>TISSUE SPECIFICITY</scope>
</reference>
<reference key="2">
    <citation type="journal article" date="2009" name="PLoS Biol.">
        <title>Lineage-specific biology revealed by a finished genome assembly of the mouse.</title>
        <authorList>
            <person name="Church D.M."/>
            <person name="Goodstadt L."/>
            <person name="Hillier L.W."/>
            <person name="Zody M.C."/>
            <person name="Goldstein S."/>
            <person name="She X."/>
            <person name="Bult C.J."/>
            <person name="Agarwala R."/>
            <person name="Cherry J.L."/>
            <person name="DiCuccio M."/>
            <person name="Hlavina W."/>
            <person name="Kapustin Y."/>
            <person name="Meric P."/>
            <person name="Maglott D."/>
            <person name="Birtle Z."/>
            <person name="Marques A.C."/>
            <person name="Graves T."/>
            <person name="Zhou S."/>
            <person name="Teague B."/>
            <person name="Potamousis K."/>
            <person name="Churas C."/>
            <person name="Place M."/>
            <person name="Herschleb J."/>
            <person name="Runnheim R."/>
            <person name="Forrest D."/>
            <person name="Amos-Landgraf J."/>
            <person name="Schwartz D.C."/>
            <person name="Cheng Z."/>
            <person name="Lindblad-Toh K."/>
            <person name="Eichler E.E."/>
            <person name="Ponting C.P."/>
        </authorList>
    </citation>
    <scope>NUCLEOTIDE SEQUENCE [LARGE SCALE GENOMIC DNA]</scope>
    <source>
        <strain>C57BL/6J</strain>
    </source>
</reference>
<reference key="3">
    <citation type="journal article" date="2009" name="J. Biol. Chem.">
        <title>Diacylglycerol kinase epsilon is selective for both acyl chains of phosphatidic acid or diacylglycerol.</title>
        <authorList>
            <person name="Lung M."/>
            <person name="Shulga Y.V."/>
            <person name="Ivanova P.T."/>
            <person name="Myers D.S."/>
            <person name="Milne S.B."/>
            <person name="Brown H.A."/>
            <person name="Topham M.K."/>
            <person name="Epand R.M."/>
        </authorList>
    </citation>
    <scope>FUNCTION</scope>
    <scope>SUBSTRATE SPECIFICITY</scope>
    <scope>PATHWAY</scope>
</reference>
<reference key="4">
    <citation type="journal article" date="2010" name="Cell">
        <title>A tissue-specific atlas of mouse protein phosphorylation and expression.</title>
        <authorList>
            <person name="Huttlin E.L."/>
            <person name="Jedrychowski M.P."/>
            <person name="Elias J.E."/>
            <person name="Goswami T."/>
            <person name="Rad R."/>
            <person name="Beausoleil S.A."/>
            <person name="Villen J."/>
            <person name="Haas W."/>
            <person name="Sowa M.E."/>
            <person name="Gygi S.P."/>
        </authorList>
    </citation>
    <scope>IDENTIFICATION BY MASS SPECTROMETRY [LARGE SCALE ANALYSIS]</scope>
    <source>
        <tissue>Brain</tissue>
        <tissue>Testis</tissue>
    </source>
</reference>
<reference key="5">
    <citation type="journal article" date="2013" name="Nat. Genet.">
        <title>Recessive mutations in DGKE cause atypical hemolytic-uremic syndrome.</title>
        <authorList>
            <person name="Lemaire M."/>
            <person name="Fremeaux-Bacchi V."/>
            <person name="Schaefer F."/>
            <person name="Choi M."/>
            <person name="Tang W.H."/>
            <person name="Le Quintrec M."/>
            <person name="Fakhouri F."/>
            <person name="Taque S."/>
            <person name="Nobili F."/>
            <person name="Martinez F."/>
            <person name="Ji W."/>
            <person name="Overton J.D."/>
            <person name="Mane S.M."/>
            <person name="Nuernberg G."/>
            <person name="Altmueller J."/>
            <person name="Thiele H."/>
            <person name="Morin D."/>
            <person name="Deschenes G."/>
            <person name="Baudouin V."/>
            <person name="Llanas B."/>
            <person name="Collard L."/>
            <person name="Majid M.A."/>
            <person name="Simkova E."/>
            <person name="Nuernberg P."/>
            <person name="Rioux-Leclerc N."/>
            <person name="Moeckel G.W."/>
            <person name="Gubler M.C."/>
            <person name="Hwa J."/>
            <person name="Loirat C."/>
            <person name="Lifton R.P."/>
        </authorList>
    </citation>
    <scope>TISSUE SPECIFICITY</scope>
</reference>
<feature type="chain" id="PRO_0000218465" description="Diacylglycerol kinase epsilon">
    <location>
        <begin position="1"/>
        <end position="564"/>
    </location>
</feature>
<feature type="transmembrane region" description="Helical" evidence="2">
    <location>
        <begin position="20"/>
        <end position="40"/>
    </location>
</feature>
<feature type="domain" description="DAGKc" evidence="4">
    <location>
        <begin position="212"/>
        <end position="353"/>
    </location>
</feature>
<feature type="zinc finger region" description="Phorbol-ester/DAG-type 1" evidence="3">
    <location>
        <begin position="57"/>
        <end position="106"/>
    </location>
</feature>
<feature type="zinc finger region" description="Phorbol-ester/DAG-type 2" evidence="3">
    <location>
        <begin position="121"/>
        <end position="174"/>
    </location>
</feature>
<protein>
    <recommendedName>
        <fullName>Diacylglycerol kinase epsilon</fullName>
        <shortName>DAG kinase epsilon</shortName>
        <ecNumber evidence="5">2.7.1.107</ecNumber>
    </recommendedName>
    <alternativeName>
        <fullName>Diglyceride kinase epsilon</fullName>
        <shortName>DGK-epsilon</shortName>
    </alternativeName>
</protein>
<proteinExistence type="evidence at protein level"/>
<name>DGKE_MOUSE</name>
<gene>
    <name type="primary">Dgke</name>
</gene>
<dbReference type="EC" id="2.7.1.107" evidence="5"/>
<dbReference type="EMBL" id="AF136744">
    <property type="protein sequence ID" value="AAD45665.1"/>
    <property type="molecule type" value="mRNA"/>
</dbReference>
<dbReference type="EMBL" id="AL646096">
    <property type="status" value="NOT_ANNOTATED_CDS"/>
    <property type="molecule type" value="Genomic_DNA"/>
</dbReference>
<dbReference type="CCDS" id="CCDS25234.1"/>
<dbReference type="RefSeq" id="NP_062378.1">
    <property type="nucleotide sequence ID" value="NM_019505.4"/>
</dbReference>
<dbReference type="BioGRID" id="207804">
    <property type="interactions" value="5"/>
</dbReference>
<dbReference type="FunCoup" id="Q9R1C6">
    <property type="interactions" value="3509"/>
</dbReference>
<dbReference type="STRING" id="10090.ENSMUSP00000103526"/>
<dbReference type="GlyGen" id="Q9R1C6">
    <property type="glycosylation" value="1 site, 1 O-linked glycan (1 site)"/>
</dbReference>
<dbReference type="iPTMnet" id="Q9R1C6"/>
<dbReference type="PhosphoSitePlus" id="Q9R1C6"/>
<dbReference type="SwissPalm" id="Q9R1C6"/>
<dbReference type="PaxDb" id="10090-ENSMUSP00000103526"/>
<dbReference type="PeptideAtlas" id="Q9R1C6"/>
<dbReference type="ProteomicsDB" id="277324"/>
<dbReference type="Pumba" id="Q9R1C6"/>
<dbReference type="Antibodypedia" id="2548">
    <property type="antibodies" value="237 antibodies from 30 providers"/>
</dbReference>
<dbReference type="DNASU" id="56077"/>
<dbReference type="Ensembl" id="ENSMUST00000000285.9">
    <property type="protein sequence ID" value="ENSMUSP00000000285.3"/>
    <property type="gene ID" value="ENSMUSG00000000276.12"/>
</dbReference>
<dbReference type="Ensembl" id="ENSMUST00000107894.8">
    <property type="protein sequence ID" value="ENSMUSP00000103526.2"/>
    <property type="gene ID" value="ENSMUSG00000000276.12"/>
</dbReference>
<dbReference type="GeneID" id="56077"/>
<dbReference type="KEGG" id="mmu:56077"/>
<dbReference type="UCSC" id="uc007kwd.1">
    <property type="organism name" value="mouse"/>
</dbReference>
<dbReference type="AGR" id="MGI:1889276"/>
<dbReference type="CTD" id="8526"/>
<dbReference type="MGI" id="MGI:1889276">
    <property type="gene designation" value="Dgke"/>
</dbReference>
<dbReference type="VEuPathDB" id="HostDB:ENSMUSG00000000276"/>
<dbReference type="eggNOG" id="KOG1169">
    <property type="taxonomic scope" value="Eukaryota"/>
</dbReference>
<dbReference type="GeneTree" id="ENSGT00940000158604"/>
<dbReference type="HOGENOM" id="CLU_003770_3_1_1"/>
<dbReference type="InParanoid" id="Q9R1C6"/>
<dbReference type="OMA" id="MQPDCER"/>
<dbReference type="OrthoDB" id="242257at2759"/>
<dbReference type="PhylomeDB" id="Q9R1C6"/>
<dbReference type="TreeFam" id="TF313104"/>
<dbReference type="BRENDA" id="2.7.1.107">
    <property type="organism ID" value="3474"/>
</dbReference>
<dbReference type="Reactome" id="R-MMU-114508">
    <property type="pathway name" value="Effects of PIP2 hydrolysis"/>
</dbReference>
<dbReference type="UniPathway" id="UPA00230"/>
<dbReference type="BioGRID-ORCS" id="56077">
    <property type="hits" value="2 hits in 79 CRISPR screens"/>
</dbReference>
<dbReference type="CD-CODE" id="CE726F99">
    <property type="entry name" value="Postsynaptic density"/>
</dbReference>
<dbReference type="ChiTaRS" id="Dgke">
    <property type="organism name" value="mouse"/>
</dbReference>
<dbReference type="PRO" id="PR:Q9R1C6"/>
<dbReference type="Proteomes" id="UP000000589">
    <property type="component" value="Chromosome 11"/>
</dbReference>
<dbReference type="RNAct" id="Q9R1C6">
    <property type="molecule type" value="protein"/>
</dbReference>
<dbReference type="Bgee" id="ENSMUSG00000000276">
    <property type="expression patterns" value="Expressed in retinal neural layer and 192 other cell types or tissues"/>
</dbReference>
<dbReference type="ExpressionAtlas" id="Q9R1C6">
    <property type="expression patterns" value="baseline and differential"/>
</dbReference>
<dbReference type="GO" id="GO:0005737">
    <property type="term" value="C:cytoplasm"/>
    <property type="evidence" value="ECO:0000250"/>
    <property type="project" value="UniProtKB"/>
</dbReference>
<dbReference type="GO" id="GO:0005829">
    <property type="term" value="C:cytosol"/>
    <property type="evidence" value="ECO:0007669"/>
    <property type="project" value="Ensembl"/>
</dbReference>
<dbReference type="GO" id="GO:0098978">
    <property type="term" value="C:glutamatergic synapse"/>
    <property type="evidence" value="ECO:0000314"/>
    <property type="project" value="SynGO"/>
</dbReference>
<dbReference type="GO" id="GO:0016020">
    <property type="term" value="C:membrane"/>
    <property type="evidence" value="ECO:0000250"/>
    <property type="project" value="UniProtKB"/>
</dbReference>
<dbReference type="GO" id="GO:0005654">
    <property type="term" value="C:nucleoplasm"/>
    <property type="evidence" value="ECO:0007669"/>
    <property type="project" value="Ensembl"/>
</dbReference>
<dbReference type="GO" id="GO:0005524">
    <property type="term" value="F:ATP binding"/>
    <property type="evidence" value="ECO:0007669"/>
    <property type="project" value="UniProtKB-KW"/>
</dbReference>
<dbReference type="GO" id="GO:0004143">
    <property type="term" value="F:ATP-dependent diacylglycerol kinase activity"/>
    <property type="evidence" value="ECO:0000250"/>
    <property type="project" value="UniProtKB"/>
</dbReference>
<dbReference type="GO" id="GO:0008270">
    <property type="term" value="F:zinc ion binding"/>
    <property type="evidence" value="ECO:0007669"/>
    <property type="project" value="UniProtKB-KW"/>
</dbReference>
<dbReference type="GO" id="GO:0046339">
    <property type="term" value="P:diacylglycerol metabolic process"/>
    <property type="evidence" value="ECO:0000250"/>
    <property type="project" value="UniProtKB"/>
</dbReference>
<dbReference type="GO" id="GO:0046834">
    <property type="term" value="P:lipid phosphorylation"/>
    <property type="evidence" value="ECO:0000250"/>
    <property type="project" value="UniProtKB"/>
</dbReference>
<dbReference type="GO" id="GO:0050804">
    <property type="term" value="P:modulation of chemical synaptic transmission"/>
    <property type="evidence" value="ECO:0000314"/>
    <property type="project" value="SynGO"/>
</dbReference>
<dbReference type="GO" id="GO:0006654">
    <property type="term" value="P:phosphatidic acid biosynthetic process"/>
    <property type="evidence" value="ECO:0007669"/>
    <property type="project" value="Ensembl"/>
</dbReference>
<dbReference type="GO" id="GO:0006661">
    <property type="term" value="P:phosphatidylinositol biosynthetic process"/>
    <property type="evidence" value="ECO:0000315"/>
    <property type="project" value="UniProtKB"/>
</dbReference>
<dbReference type="GO" id="GO:0007200">
    <property type="term" value="P:phospholipase C-activating G protein-coupled receptor signaling pathway"/>
    <property type="evidence" value="ECO:0007669"/>
    <property type="project" value="InterPro"/>
</dbReference>
<dbReference type="CDD" id="cd20801">
    <property type="entry name" value="C1_DGKepsilon_typeIII_rpt1"/>
    <property type="match status" value="1"/>
</dbReference>
<dbReference type="CDD" id="cd20853">
    <property type="entry name" value="C1_DGKepsilon_typeIII_rpt2"/>
    <property type="match status" value="1"/>
</dbReference>
<dbReference type="FunFam" id="2.60.200.40:FF:000005">
    <property type="entry name" value="Diacylglycerol kinase"/>
    <property type="match status" value="1"/>
</dbReference>
<dbReference type="FunFam" id="3.30.60.20:FF:000002">
    <property type="entry name" value="Diacylglycerol kinase"/>
    <property type="match status" value="1"/>
</dbReference>
<dbReference type="FunFam" id="3.40.50.10330:FF:000007">
    <property type="entry name" value="Diacylglycerol kinase"/>
    <property type="match status" value="1"/>
</dbReference>
<dbReference type="Gene3D" id="2.60.200.40">
    <property type="match status" value="1"/>
</dbReference>
<dbReference type="Gene3D" id="3.30.60.20">
    <property type="match status" value="1"/>
</dbReference>
<dbReference type="Gene3D" id="3.40.50.10330">
    <property type="entry name" value="Probable inorganic polyphosphate/atp-NAD kinase, domain 1"/>
    <property type="match status" value="1"/>
</dbReference>
<dbReference type="InterPro" id="IPR017438">
    <property type="entry name" value="ATP-NAD_kinase_N"/>
</dbReference>
<dbReference type="InterPro" id="IPR046349">
    <property type="entry name" value="C1-like_sf"/>
</dbReference>
<dbReference type="InterPro" id="IPR037607">
    <property type="entry name" value="DGK"/>
</dbReference>
<dbReference type="InterPro" id="IPR000756">
    <property type="entry name" value="Diacylglycerol_kin_accessory"/>
</dbReference>
<dbReference type="InterPro" id="IPR001206">
    <property type="entry name" value="Diacylglycerol_kinase_cat_dom"/>
</dbReference>
<dbReference type="InterPro" id="IPR016064">
    <property type="entry name" value="NAD/diacylglycerol_kinase_sf"/>
</dbReference>
<dbReference type="InterPro" id="IPR002219">
    <property type="entry name" value="PE/DAG-bd"/>
</dbReference>
<dbReference type="PANTHER" id="PTHR11255">
    <property type="entry name" value="DIACYLGLYCEROL KINASE"/>
    <property type="match status" value="1"/>
</dbReference>
<dbReference type="PANTHER" id="PTHR11255:SF118">
    <property type="entry name" value="DIACYLGLYCEROL KINASE EPSILON"/>
    <property type="match status" value="1"/>
</dbReference>
<dbReference type="Pfam" id="PF00130">
    <property type="entry name" value="C1_1"/>
    <property type="match status" value="1"/>
</dbReference>
<dbReference type="Pfam" id="PF00609">
    <property type="entry name" value="DAGK_acc"/>
    <property type="match status" value="1"/>
</dbReference>
<dbReference type="Pfam" id="PF00781">
    <property type="entry name" value="DAGK_cat"/>
    <property type="match status" value="1"/>
</dbReference>
<dbReference type="SMART" id="SM00109">
    <property type="entry name" value="C1"/>
    <property type="match status" value="2"/>
</dbReference>
<dbReference type="SMART" id="SM00045">
    <property type="entry name" value="DAGKa"/>
    <property type="match status" value="1"/>
</dbReference>
<dbReference type="SMART" id="SM00046">
    <property type="entry name" value="DAGKc"/>
    <property type="match status" value="1"/>
</dbReference>
<dbReference type="SUPFAM" id="SSF57889">
    <property type="entry name" value="Cysteine-rich domain"/>
    <property type="match status" value="1"/>
</dbReference>
<dbReference type="SUPFAM" id="SSF111331">
    <property type="entry name" value="NAD kinase/diacylglycerol kinase-like"/>
    <property type="match status" value="1"/>
</dbReference>
<dbReference type="PROSITE" id="PS50146">
    <property type="entry name" value="DAGK"/>
    <property type="match status" value="1"/>
</dbReference>
<dbReference type="PROSITE" id="PS00479">
    <property type="entry name" value="ZF_DAG_PE_1"/>
    <property type="match status" value="2"/>
</dbReference>
<dbReference type="PROSITE" id="PS50081">
    <property type="entry name" value="ZF_DAG_PE_2"/>
    <property type="match status" value="2"/>
</dbReference>
<accession>Q9R1C6</accession>
<accession>Q5SU69</accession>